<name>NFI_KOSOT</name>
<reference key="1">
    <citation type="submission" date="2009-06" db="EMBL/GenBank/DDBJ databases">
        <title>Complete sequence of Thermotogales bacterium TBF 19.5.1.</title>
        <authorList>
            <consortium name="US DOE Joint Genome Institute"/>
            <person name="Lucas S."/>
            <person name="Copeland A."/>
            <person name="Lapidus A."/>
            <person name="Glavina del Rio T."/>
            <person name="Tice H."/>
            <person name="Bruce D."/>
            <person name="Goodwin L."/>
            <person name="Pitluck S."/>
            <person name="Chertkov O."/>
            <person name="Brettin T."/>
            <person name="Detter J.C."/>
            <person name="Han C."/>
            <person name="Schmutz J."/>
            <person name="Larimer F."/>
            <person name="Land M."/>
            <person name="Hauser L."/>
            <person name="Kyrpides N."/>
            <person name="Ovchinnikova G."/>
            <person name="Noll K."/>
        </authorList>
    </citation>
    <scope>NUCLEOTIDE SEQUENCE [LARGE SCALE GENOMIC DNA]</scope>
    <source>
        <strain>ATCC BAA-1733 / DSM 21960 / TBF 19.5.1</strain>
    </source>
</reference>
<comment type="function">
    <text evidence="1">DNA repair enzyme involved in the repair of deaminated bases. Selectively cleaves double-stranded DNA at the second phosphodiester bond 3' to a deoxyinosine leaving behind the intact lesion on the nicked DNA.</text>
</comment>
<comment type="catalytic activity">
    <reaction evidence="1">
        <text>Endonucleolytic cleavage at apurinic or apyrimidinic sites to products with a 5'-phosphate.</text>
        <dbReference type="EC" id="3.1.21.7"/>
    </reaction>
</comment>
<comment type="cofactor">
    <cofactor evidence="1">
        <name>Mg(2+)</name>
        <dbReference type="ChEBI" id="CHEBI:18420"/>
    </cofactor>
</comment>
<comment type="subcellular location">
    <subcellularLocation>
        <location evidence="1">Cytoplasm</location>
    </subcellularLocation>
</comment>
<comment type="similarity">
    <text evidence="1">Belongs to the endonuclease V family.</text>
</comment>
<keyword id="KW-0963">Cytoplasm</keyword>
<keyword id="KW-0227">DNA damage</keyword>
<keyword id="KW-0234">DNA repair</keyword>
<keyword id="KW-0255">Endonuclease</keyword>
<keyword id="KW-0378">Hydrolase</keyword>
<keyword id="KW-0460">Magnesium</keyword>
<keyword id="KW-0479">Metal-binding</keyword>
<keyword id="KW-0540">Nuclease</keyword>
<keyword id="KW-1185">Reference proteome</keyword>
<feature type="chain" id="PRO_1000212974" description="Endonuclease V">
    <location>
        <begin position="1"/>
        <end position="226"/>
    </location>
</feature>
<feature type="binding site" evidence="1">
    <location>
        <position position="43"/>
    </location>
    <ligand>
        <name>Mg(2+)</name>
        <dbReference type="ChEBI" id="CHEBI:18420"/>
    </ligand>
</feature>
<feature type="binding site" evidence="1">
    <location>
        <position position="109"/>
    </location>
    <ligand>
        <name>Mg(2+)</name>
        <dbReference type="ChEBI" id="CHEBI:18420"/>
    </ligand>
</feature>
<feature type="site" description="Interaction with target DNA" evidence="1">
    <location>
        <position position="79"/>
    </location>
</feature>
<organism>
    <name type="scientific">Kosmotoga olearia (strain ATCC BAA-1733 / DSM 21960 / TBF 19.5.1)</name>
    <dbReference type="NCBI Taxonomy" id="521045"/>
    <lineage>
        <taxon>Bacteria</taxon>
        <taxon>Thermotogati</taxon>
        <taxon>Thermotogota</taxon>
        <taxon>Thermotogae</taxon>
        <taxon>Kosmotogales</taxon>
        <taxon>Kosmotogaceae</taxon>
        <taxon>Kosmotoga</taxon>
    </lineage>
</organism>
<protein>
    <recommendedName>
        <fullName evidence="1">Endonuclease V</fullName>
        <ecNumber evidence="1">3.1.21.7</ecNumber>
    </recommendedName>
    <alternativeName>
        <fullName evidence="1">Deoxyinosine 3'endonuclease</fullName>
    </alternativeName>
    <alternativeName>
        <fullName evidence="1">Deoxyribonuclease V</fullName>
        <shortName evidence="1">DNase V</shortName>
    </alternativeName>
</protein>
<proteinExistence type="inferred from homology"/>
<sequence>MKIRCLHDWNVSLEEAADIQRTLKGMLSFEFPAKKVSIVAGVDVSFPQKNLGLCVIVVMDDTLKVIESVYHTQEVHIPYVSGFLSFREGPIFIETVKKLKIVPDLFFFDGQGIAHPRGLGIAAHMGLLLEKPSLGVAKSHLFGSYNEPGRNKGDFSYMYNKTGEIIGTVLRTKKNTKPVFVSPGHMMDVDTAMSLTLKYTGKYRLPEPTRQAHILTQRLRKNHLLR</sequence>
<gene>
    <name evidence="1" type="primary">nfi</name>
    <name type="ordered locus">Kole_1869</name>
</gene>
<dbReference type="EC" id="3.1.21.7" evidence="1"/>
<dbReference type="EMBL" id="CP001634">
    <property type="protein sequence ID" value="ACR80550.1"/>
    <property type="molecule type" value="Genomic_DNA"/>
</dbReference>
<dbReference type="RefSeq" id="WP_015869193.1">
    <property type="nucleotide sequence ID" value="NC_012785.1"/>
</dbReference>
<dbReference type="SMR" id="C5CGG9"/>
<dbReference type="STRING" id="521045.Kole_1869"/>
<dbReference type="KEGG" id="kol:Kole_1869"/>
<dbReference type="eggNOG" id="COG1515">
    <property type="taxonomic scope" value="Bacteria"/>
</dbReference>
<dbReference type="HOGENOM" id="CLU_047631_1_1_0"/>
<dbReference type="OrthoDB" id="9790916at2"/>
<dbReference type="Proteomes" id="UP000002382">
    <property type="component" value="Chromosome"/>
</dbReference>
<dbReference type="GO" id="GO:0005737">
    <property type="term" value="C:cytoplasm"/>
    <property type="evidence" value="ECO:0007669"/>
    <property type="project" value="UniProtKB-SubCell"/>
</dbReference>
<dbReference type="GO" id="GO:0043737">
    <property type="term" value="F:deoxyribonuclease V activity"/>
    <property type="evidence" value="ECO:0007669"/>
    <property type="project" value="UniProtKB-UniRule"/>
</dbReference>
<dbReference type="GO" id="GO:0000287">
    <property type="term" value="F:magnesium ion binding"/>
    <property type="evidence" value="ECO:0007669"/>
    <property type="project" value="UniProtKB-UniRule"/>
</dbReference>
<dbReference type="GO" id="GO:0016891">
    <property type="term" value="F:RNA endonuclease activity, producing 5'-phosphomonoesters"/>
    <property type="evidence" value="ECO:0007669"/>
    <property type="project" value="TreeGrafter"/>
</dbReference>
<dbReference type="GO" id="GO:0003727">
    <property type="term" value="F:single-stranded RNA binding"/>
    <property type="evidence" value="ECO:0007669"/>
    <property type="project" value="TreeGrafter"/>
</dbReference>
<dbReference type="GO" id="GO:0006281">
    <property type="term" value="P:DNA repair"/>
    <property type="evidence" value="ECO:0007669"/>
    <property type="project" value="UniProtKB-UniRule"/>
</dbReference>
<dbReference type="CDD" id="cd06559">
    <property type="entry name" value="Endonuclease_V"/>
    <property type="match status" value="1"/>
</dbReference>
<dbReference type="Gene3D" id="3.30.2170.10">
    <property type="entry name" value="archaeoglobus fulgidus dsm 4304 superfamily"/>
    <property type="match status" value="1"/>
</dbReference>
<dbReference type="HAMAP" id="MF_00801">
    <property type="entry name" value="Endonuclease_5"/>
    <property type="match status" value="1"/>
</dbReference>
<dbReference type="InterPro" id="IPR007581">
    <property type="entry name" value="Endonuclease-V"/>
</dbReference>
<dbReference type="InterPro" id="IPR053396">
    <property type="entry name" value="Endonuclease_V-like"/>
</dbReference>
<dbReference type="NCBIfam" id="NF041102">
    <property type="entry name" value="endonuc_V_Ttgales"/>
    <property type="match status" value="1"/>
</dbReference>
<dbReference type="PANTHER" id="PTHR28511">
    <property type="entry name" value="ENDONUCLEASE V"/>
    <property type="match status" value="1"/>
</dbReference>
<dbReference type="PANTHER" id="PTHR28511:SF1">
    <property type="entry name" value="ENDONUCLEASE V"/>
    <property type="match status" value="1"/>
</dbReference>
<dbReference type="Pfam" id="PF04493">
    <property type="entry name" value="Endonuclease_5"/>
    <property type="match status" value="1"/>
</dbReference>
<accession>C5CGG9</accession>
<evidence type="ECO:0000255" key="1">
    <source>
        <dbReference type="HAMAP-Rule" id="MF_00801"/>
    </source>
</evidence>